<comment type="function">
    <text evidence="1">Displays ATPase and GTPase activities.</text>
</comment>
<comment type="similarity">
    <text evidence="1">Belongs to the RapZ-like family.</text>
</comment>
<accession>Q21FU1</accession>
<feature type="chain" id="PRO_0000258995" description="Nucleotide-binding protein Sde_3181">
    <location>
        <begin position="1"/>
        <end position="290"/>
    </location>
</feature>
<feature type="binding site" evidence="1">
    <location>
        <begin position="8"/>
        <end position="15"/>
    </location>
    <ligand>
        <name>ATP</name>
        <dbReference type="ChEBI" id="CHEBI:30616"/>
    </ligand>
</feature>
<feature type="binding site" evidence="1">
    <location>
        <begin position="60"/>
        <end position="63"/>
    </location>
    <ligand>
        <name>GTP</name>
        <dbReference type="ChEBI" id="CHEBI:37565"/>
    </ligand>
</feature>
<protein>
    <recommendedName>
        <fullName evidence="1">Nucleotide-binding protein Sde_3181</fullName>
    </recommendedName>
</protein>
<keyword id="KW-0067">ATP-binding</keyword>
<keyword id="KW-0342">GTP-binding</keyword>
<keyword id="KW-0547">Nucleotide-binding</keyword>
<keyword id="KW-1185">Reference proteome</keyword>
<proteinExistence type="inferred from homology"/>
<sequence length="290" mass="32115">MRLLVISGRSGSGKTSALHLLEDEGFTCIDNLPVKLLPALIEQIGDAPHASKHKFAIGIDARNLNSDLSQIESLIKDNLPANAECLVVYLDTSREVLLKRFSETRRKHPLSDQNTGLNEAIAKEKVILEPVAAAADITVDTSHMSLHELRSTIKRLVVGEESKGMAIMFKSFGFKYGVPVDADFIFDVRCLPNPYWSPELRSQSGLEAGVIEFLNSQQEVDDMFDDICAFVQKWAPSFQANNRSYLTVAIGCTGGMHRSVYLAERLAAELKKGYANVQTRHRQLEQKPGA</sequence>
<organism>
    <name type="scientific">Saccharophagus degradans (strain 2-40 / ATCC 43961 / DSM 17024)</name>
    <dbReference type="NCBI Taxonomy" id="203122"/>
    <lineage>
        <taxon>Bacteria</taxon>
        <taxon>Pseudomonadati</taxon>
        <taxon>Pseudomonadota</taxon>
        <taxon>Gammaproteobacteria</taxon>
        <taxon>Cellvibrionales</taxon>
        <taxon>Cellvibrionaceae</taxon>
        <taxon>Saccharophagus</taxon>
    </lineage>
</organism>
<evidence type="ECO:0000255" key="1">
    <source>
        <dbReference type="HAMAP-Rule" id="MF_00636"/>
    </source>
</evidence>
<reference key="1">
    <citation type="journal article" date="2008" name="PLoS Genet.">
        <title>Complete genome sequence of the complex carbohydrate-degrading marine bacterium, Saccharophagus degradans strain 2-40 T.</title>
        <authorList>
            <person name="Weiner R.M."/>
            <person name="Taylor L.E. II"/>
            <person name="Henrissat B."/>
            <person name="Hauser L."/>
            <person name="Land M."/>
            <person name="Coutinho P.M."/>
            <person name="Rancurel C."/>
            <person name="Saunders E.H."/>
            <person name="Longmire A.G."/>
            <person name="Zhang H."/>
            <person name="Bayer E.A."/>
            <person name="Gilbert H.J."/>
            <person name="Larimer F."/>
            <person name="Zhulin I.B."/>
            <person name="Ekborg N.A."/>
            <person name="Lamed R."/>
            <person name="Richardson P.M."/>
            <person name="Borovok I."/>
            <person name="Hutcheson S."/>
        </authorList>
    </citation>
    <scope>NUCLEOTIDE SEQUENCE [LARGE SCALE GENOMIC DNA]</scope>
    <source>
        <strain>2-40 / ATCC 43961 / DSM 17024</strain>
    </source>
</reference>
<gene>
    <name type="ordered locus">Sde_3181</name>
</gene>
<dbReference type="EMBL" id="CP000282">
    <property type="protein sequence ID" value="ABD82438.1"/>
    <property type="molecule type" value="Genomic_DNA"/>
</dbReference>
<dbReference type="RefSeq" id="WP_011469654.1">
    <property type="nucleotide sequence ID" value="NC_007912.1"/>
</dbReference>
<dbReference type="SMR" id="Q21FU1"/>
<dbReference type="STRING" id="203122.Sde_3181"/>
<dbReference type="GeneID" id="98614808"/>
<dbReference type="KEGG" id="sde:Sde_3181"/>
<dbReference type="eggNOG" id="COG1660">
    <property type="taxonomic scope" value="Bacteria"/>
</dbReference>
<dbReference type="HOGENOM" id="CLU_059558_1_1_6"/>
<dbReference type="OrthoDB" id="9784461at2"/>
<dbReference type="Proteomes" id="UP000001947">
    <property type="component" value="Chromosome"/>
</dbReference>
<dbReference type="GO" id="GO:0005524">
    <property type="term" value="F:ATP binding"/>
    <property type="evidence" value="ECO:0007669"/>
    <property type="project" value="UniProtKB-UniRule"/>
</dbReference>
<dbReference type="GO" id="GO:0005525">
    <property type="term" value="F:GTP binding"/>
    <property type="evidence" value="ECO:0007669"/>
    <property type="project" value="UniProtKB-UniRule"/>
</dbReference>
<dbReference type="Gene3D" id="3.40.50.300">
    <property type="entry name" value="P-loop containing nucleotide triphosphate hydrolases"/>
    <property type="match status" value="1"/>
</dbReference>
<dbReference type="HAMAP" id="MF_00636">
    <property type="entry name" value="RapZ_like"/>
    <property type="match status" value="1"/>
</dbReference>
<dbReference type="InterPro" id="IPR027417">
    <property type="entry name" value="P-loop_NTPase"/>
</dbReference>
<dbReference type="InterPro" id="IPR005337">
    <property type="entry name" value="RapZ-like"/>
</dbReference>
<dbReference type="InterPro" id="IPR053930">
    <property type="entry name" value="RapZ-like_N"/>
</dbReference>
<dbReference type="InterPro" id="IPR053931">
    <property type="entry name" value="RapZ_C"/>
</dbReference>
<dbReference type="NCBIfam" id="NF003828">
    <property type="entry name" value="PRK05416.1"/>
    <property type="match status" value="1"/>
</dbReference>
<dbReference type="PANTHER" id="PTHR30448">
    <property type="entry name" value="RNASE ADAPTER PROTEIN RAPZ"/>
    <property type="match status" value="1"/>
</dbReference>
<dbReference type="PANTHER" id="PTHR30448:SF0">
    <property type="entry name" value="RNASE ADAPTER PROTEIN RAPZ"/>
    <property type="match status" value="1"/>
</dbReference>
<dbReference type="Pfam" id="PF22740">
    <property type="entry name" value="PapZ_C"/>
    <property type="match status" value="1"/>
</dbReference>
<dbReference type="Pfam" id="PF03668">
    <property type="entry name" value="RapZ-like_N"/>
    <property type="match status" value="1"/>
</dbReference>
<dbReference type="PIRSF" id="PIRSF005052">
    <property type="entry name" value="P-loopkin"/>
    <property type="match status" value="1"/>
</dbReference>
<dbReference type="SUPFAM" id="SSF52540">
    <property type="entry name" value="P-loop containing nucleoside triphosphate hydrolases"/>
    <property type="match status" value="1"/>
</dbReference>
<name>Y3181_SACD2</name>